<organism>
    <name type="scientific">Caenorhabditis briggsae</name>
    <dbReference type="NCBI Taxonomy" id="6238"/>
    <lineage>
        <taxon>Eukaryota</taxon>
        <taxon>Metazoa</taxon>
        <taxon>Ecdysozoa</taxon>
        <taxon>Nematoda</taxon>
        <taxon>Chromadorea</taxon>
        <taxon>Rhabditida</taxon>
        <taxon>Rhabditina</taxon>
        <taxon>Rhabditomorpha</taxon>
        <taxon>Rhabditoidea</taxon>
        <taxon>Rhabditidae</taxon>
        <taxon>Peloderinae</taxon>
        <taxon>Caenorhabditis</taxon>
    </lineage>
</organism>
<keyword id="KW-0963">Cytoplasm</keyword>
<keyword id="KW-0396">Initiation factor</keyword>
<keyword id="KW-0648">Protein biosynthesis</keyword>
<keyword id="KW-1185">Reference proteome</keyword>
<keyword id="KW-0694">RNA-binding</keyword>
<comment type="function">
    <text evidence="1">RNA-binding component of the eukaryotic translation initiation factor 3 (eIF-3) complex, which is involved in protein synthesis of a specialized repertoire of mRNAs and, together with other initiation factors, stimulates binding of mRNA and methionyl-tRNAi to the 40S ribosome. The eIF-3 complex specifically targets and initiates translation of a subset of mRNAs involved in cell proliferation. This subunit can bind 18S rRNA.</text>
</comment>
<comment type="subunit">
    <text evidence="1">Component of the eukaryotic translation initiation factor 3 (eIF-3) complex.</text>
</comment>
<comment type="subcellular location">
    <subcellularLocation>
        <location evidence="1">Cytoplasm</location>
    </subcellularLocation>
</comment>
<comment type="similarity">
    <text evidence="1">Belongs to the eIF-3 subunit G family.</text>
</comment>
<gene>
    <name evidence="1 4" type="primary">eif-3.G.1</name>
    <name evidence="4" type="ORF">CBG00635</name>
</gene>
<gene>
    <name evidence="1 5" type="primary">eif-3.G.2</name>
    <name evidence="5" type="ORF">CBG24970</name>
</gene>
<dbReference type="EMBL" id="HE600999">
    <property type="protein sequence ID" value="CAP22000.2"/>
    <property type="molecule type" value="Genomic_DNA"/>
</dbReference>
<dbReference type="EMBL" id="HE601195">
    <property type="protein sequence ID" value="CAP21453.2"/>
    <property type="molecule type" value="Genomic_DNA"/>
</dbReference>
<dbReference type="SMR" id="A8WLV5"/>
<dbReference type="FunCoup" id="A8WLV5">
    <property type="interactions" value="2444"/>
</dbReference>
<dbReference type="STRING" id="6238.A8WLV5"/>
<dbReference type="EnsemblMetazoa" id="CBG00635.1">
    <property type="protein sequence ID" value="CBG00635.1"/>
    <property type="gene ID" value="WBGene00024001"/>
</dbReference>
<dbReference type="EnsemblMetazoa" id="CBG24970.1">
    <property type="protein sequence ID" value="CBG24970.1"/>
    <property type="gene ID" value="WBGene00042956"/>
</dbReference>
<dbReference type="WormBase" id="CBG00635">
    <property type="protein sequence ID" value="CBP25767"/>
    <property type="gene ID" value="WBGene00024001"/>
    <property type="gene designation" value="Cbr-eif-3.G.1"/>
</dbReference>
<dbReference type="WormBase" id="CBG24970">
    <property type="protein sequence ID" value="CBP25767"/>
    <property type="gene ID" value="WBGene00042956"/>
    <property type="gene designation" value="Cbr-eif-3.G.2"/>
</dbReference>
<dbReference type="eggNOG" id="KOG0122">
    <property type="taxonomic scope" value="Eukaryota"/>
</dbReference>
<dbReference type="HOGENOM" id="CLU_034595_0_0_1"/>
<dbReference type="InParanoid" id="A8WLV5"/>
<dbReference type="OMA" id="ICQGDHF"/>
<dbReference type="OrthoDB" id="2011769at2759"/>
<dbReference type="Proteomes" id="UP000008549">
    <property type="component" value="Unassembled WGS sequence"/>
</dbReference>
<dbReference type="GO" id="GO:0016282">
    <property type="term" value="C:eukaryotic 43S preinitiation complex"/>
    <property type="evidence" value="ECO:0007669"/>
    <property type="project" value="UniProtKB-UniRule"/>
</dbReference>
<dbReference type="GO" id="GO:0033290">
    <property type="term" value="C:eukaryotic 48S preinitiation complex"/>
    <property type="evidence" value="ECO:0007669"/>
    <property type="project" value="UniProtKB-UniRule"/>
</dbReference>
<dbReference type="GO" id="GO:0005852">
    <property type="term" value="C:eukaryotic translation initiation factor 3 complex"/>
    <property type="evidence" value="ECO:0007669"/>
    <property type="project" value="UniProtKB-UniRule"/>
</dbReference>
<dbReference type="GO" id="GO:0003723">
    <property type="term" value="F:RNA binding"/>
    <property type="evidence" value="ECO:0007669"/>
    <property type="project" value="UniProtKB-UniRule"/>
</dbReference>
<dbReference type="GO" id="GO:0003743">
    <property type="term" value="F:translation initiation factor activity"/>
    <property type="evidence" value="ECO:0007669"/>
    <property type="project" value="UniProtKB-UniRule"/>
</dbReference>
<dbReference type="GO" id="GO:0001732">
    <property type="term" value="P:formation of cytoplasmic translation initiation complex"/>
    <property type="evidence" value="ECO:0007669"/>
    <property type="project" value="UniProtKB-UniRule"/>
</dbReference>
<dbReference type="CDD" id="cd12933">
    <property type="entry name" value="eIF3G"/>
    <property type="match status" value="1"/>
</dbReference>
<dbReference type="CDD" id="cd12408">
    <property type="entry name" value="RRM_eIF3G_like"/>
    <property type="match status" value="1"/>
</dbReference>
<dbReference type="FunFam" id="3.30.70.330:FF:001019">
    <property type="entry name" value="Eukaryotic translation initiation factor 3 subunit G"/>
    <property type="match status" value="1"/>
</dbReference>
<dbReference type="Gene3D" id="3.30.70.330">
    <property type="match status" value="1"/>
</dbReference>
<dbReference type="HAMAP" id="MF_03006">
    <property type="entry name" value="eIF3g"/>
    <property type="match status" value="1"/>
</dbReference>
<dbReference type="InterPro" id="IPR017334">
    <property type="entry name" value="eIF3_g"/>
</dbReference>
<dbReference type="InterPro" id="IPR024675">
    <property type="entry name" value="eIF3g_N"/>
</dbReference>
<dbReference type="InterPro" id="IPR034240">
    <property type="entry name" value="eIF3G_RRM"/>
</dbReference>
<dbReference type="InterPro" id="IPR012677">
    <property type="entry name" value="Nucleotide-bd_a/b_plait_sf"/>
</dbReference>
<dbReference type="InterPro" id="IPR035979">
    <property type="entry name" value="RBD_domain_sf"/>
</dbReference>
<dbReference type="InterPro" id="IPR000504">
    <property type="entry name" value="RRM_dom"/>
</dbReference>
<dbReference type="PANTHER" id="PTHR10352">
    <property type="entry name" value="EUKARYOTIC TRANSLATION INITIATION FACTOR 3 SUBUNIT G"/>
    <property type="match status" value="1"/>
</dbReference>
<dbReference type="Pfam" id="PF12353">
    <property type="entry name" value="eIF3g"/>
    <property type="match status" value="1"/>
</dbReference>
<dbReference type="Pfam" id="PF00076">
    <property type="entry name" value="RRM_1"/>
    <property type="match status" value="1"/>
</dbReference>
<dbReference type="PIRSF" id="PIRSF037949">
    <property type="entry name" value="Transl_init_eIF-3_RNA-bind"/>
    <property type="match status" value="1"/>
</dbReference>
<dbReference type="SMART" id="SM00360">
    <property type="entry name" value="RRM"/>
    <property type="match status" value="1"/>
</dbReference>
<dbReference type="SUPFAM" id="SSF54928">
    <property type="entry name" value="RNA-binding domain, RBD"/>
    <property type="match status" value="1"/>
</dbReference>
<dbReference type="PROSITE" id="PS50102">
    <property type="entry name" value="RRM"/>
    <property type="match status" value="1"/>
</dbReference>
<reference evidence="3" key="1">
    <citation type="journal article" date="2003" name="PLoS Biol.">
        <title>The genome sequence of Caenorhabditis briggsae: a platform for comparative genomics.</title>
        <authorList>
            <person name="Stein L.D."/>
            <person name="Bao Z."/>
            <person name="Blasiar D."/>
            <person name="Blumenthal T."/>
            <person name="Brent M.R."/>
            <person name="Chen N."/>
            <person name="Chinwalla A."/>
            <person name="Clarke L."/>
            <person name="Clee C."/>
            <person name="Coghlan A."/>
            <person name="Coulson A."/>
            <person name="D'Eustachio P."/>
            <person name="Fitch D.H.A."/>
            <person name="Fulton L.A."/>
            <person name="Fulton R.E."/>
            <person name="Griffiths-Jones S."/>
            <person name="Harris T.W."/>
            <person name="Hillier L.W."/>
            <person name="Kamath R."/>
            <person name="Kuwabara P.E."/>
            <person name="Mardis E.R."/>
            <person name="Marra M.A."/>
            <person name="Miner T.L."/>
            <person name="Minx P."/>
            <person name="Mullikin J.C."/>
            <person name="Plumb R.W."/>
            <person name="Rogers J."/>
            <person name="Schein J.E."/>
            <person name="Sohrmann M."/>
            <person name="Spieth J."/>
            <person name="Stajich J.E."/>
            <person name="Wei C."/>
            <person name="Willey D."/>
            <person name="Wilson R.K."/>
            <person name="Durbin R.M."/>
            <person name="Waterston R.H."/>
        </authorList>
    </citation>
    <scope>NUCLEOTIDE SEQUENCE [LARGE SCALE GENOMIC DNA]</scope>
    <source>
        <strain evidence="3">AF16</strain>
    </source>
</reference>
<feature type="chain" id="PRO_0000365030" description="Eukaryotic translation initiation factor 3 subunit G">
    <location>
        <begin position="1"/>
        <end position="261"/>
    </location>
</feature>
<feature type="domain" description="RRM" evidence="1">
    <location>
        <begin position="181"/>
        <end position="259"/>
    </location>
</feature>
<feature type="region of interest" description="Disordered" evidence="2">
    <location>
        <begin position="156"/>
        <end position="180"/>
    </location>
</feature>
<feature type="compositionally biased region" description="Basic and acidic residues" evidence="2">
    <location>
        <begin position="168"/>
        <end position="180"/>
    </location>
</feature>
<protein>
    <recommendedName>
        <fullName evidence="1">Eukaryotic translation initiation factor 3 subunit G</fullName>
        <shortName evidence="1">eIF3g</shortName>
    </recommendedName>
    <alternativeName>
        <fullName evidence="1">Eukaryotic translation initiation factor 3 RNA-binding subunit</fullName>
        <shortName evidence="1">eIF-3 RNA-binding subunit</shortName>
    </alternativeName>
    <alternativeName>
        <fullName evidence="1">Eukaryotic translation initiation factor 3 subunit 4</fullName>
    </alternativeName>
</protein>
<accession>A8WLV5</accession>
<evidence type="ECO:0000255" key="1">
    <source>
        <dbReference type="HAMAP-Rule" id="MF_03006"/>
    </source>
</evidence>
<evidence type="ECO:0000256" key="2">
    <source>
        <dbReference type="SAM" id="MobiDB-lite"/>
    </source>
</evidence>
<evidence type="ECO:0000312" key="3">
    <source>
        <dbReference type="EMBL" id="CAP21453.2"/>
    </source>
</evidence>
<evidence type="ECO:0000312" key="4">
    <source>
        <dbReference type="WormBase" id="CBG00635"/>
    </source>
</evidence>
<evidence type="ECO:0000312" key="5">
    <source>
        <dbReference type="WormBase" id="CBG24970"/>
    </source>
</evidence>
<proteinExistence type="inferred from homology"/>
<name>EIF3G_CAEBR</name>
<sequence>MTGINLITSAPEVNSWAEAVEQDSAPHIQEGADGIRTETAFTEVDGVRYKVVTQFKVINKRVPKVVADRKKWVKFGSCKGEPAGPQVATTYVAEEVEMQFTRNRAGEQILDVQEDKQAAKTTSREHCRHCKGNDHWSTHCPYKVMYQLDEEADANQDADSKNALGLRGDGRQMERNRSDENTCRVTNLPQEMNEDELRDVFGRIGRVIRIFIARDKITGLPKGFAFVTFESRDDAARAIAELNDIRMYHMVLKVEWTRPSN</sequence>